<reference key="1">
    <citation type="journal article" date="1995" name="DNA Res.">
        <title>Cloning and sequencing of a 36-kb region of the Bacillus subtilis genome between the gnt and iol operons.</title>
        <authorList>
            <person name="Yoshida K."/>
            <person name="Seki S."/>
            <person name="Fujimura M."/>
            <person name="Miwa Y."/>
            <person name="Fujita Y."/>
        </authorList>
    </citation>
    <scope>NUCLEOTIDE SEQUENCE [GENOMIC DNA]</scope>
    <source>
        <strain>168 / BGSC1A1</strain>
    </source>
</reference>
<reference key="2">
    <citation type="journal article" date="1997" name="Nature">
        <title>The complete genome sequence of the Gram-positive bacterium Bacillus subtilis.</title>
        <authorList>
            <person name="Kunst F."/>
            <person name="Ogasawara N."/>
            <person name="Moszer I."/>
            <person name="Albertini A.M."/>
            <person name="Alloni G."/>
            <person name="Azevedo V."/>
            <person name="Bertero M.G."/>
            <person name="Bessieres P."/>
            <person name="Bolotin A."/>
            <person name="Borchert S."/>
            <person name="Borriss R."/>
            <person name="Boursier L."/>
            <person name="Brans A."/>
            <person name="Braun M."/>
            <person name="Brignell S.C."/>
            <person name="Bron S."/>
            <person name="Brouillet S."/>
            <person name="Bruschi C.V."/>
            <person name="Caldwell B."/>
            <person name="Capuano V."/>
            <person name="Carter N.M."/>
            <person name="Choi S.-K."/>
            <person name="Codani J.-J."/>
            <person name="Connerton I.F."/>
            <person name="Cummings N.J."/>
            <person name="Daniel R.A."/>
            <person name="Denizot F."/>
            <person name="Devine K.M."/>
            <person name="Duesterhoeft A."/>
            <person name="Ehrlich S.D."/>
            <person name="Emmerson P.T."/>
            <person name="Entian K.-D."/>
            <person name="Errington J."/>
            <person name="Fabret C."/>
            <person name="Ferrari E."/>
            <person name="Foulger D."/>
            <person name="Fritz C."/>
            <person name="Fujita M."/>
            <person name="Fujita Y."/>
            <person name="Fuma S."/>
            <person name="Galizzi A."/>
            <person name="Galleron N."/>
            <person name="Ghim S.-Y."/>
            <person name="Glaser P."/>
            <person name="Goffeau A."/>
            <person name="Golightly E.J."/>
            <person name="Grandi G."/>
            <person name="Guiseppi G."/>
            <person name="Guy B.J."/>
            <person name="Haga K."/>
            <person name="Haiech J."/>
            <person name="Harwood C.R."/>
            <person name="Henaut A."/>
            <person name="Hilbert H."/>
            <person name="Holsappel S."/>
            <person name="Hosono S."/>
            <person name="Hullo M.-F."/>
            <person name="Itaya M."/>
            <person name="Jones L.-M."/>
            <person name="Joris B."/>
            <person name="Karamata D."/>
            <person name="Kasahara Y."/>
            <person name="Klaerr-Blanchard M."/>
            <person name="Klein C."/>
            <person name="Kobayashi Y."/>
            <person name="Koetter P."/>
            <person name="Koningstein G."/>
            <person name="Krogh S."/>
            <person name="Kumano M."/>
            <person name="Kurita K."/>
            <person name="Lapidus A."/>
            <person name="Lardinois S."/>
            <person name="Lauber J."/>
            <person name="Lazarevic V."/>
            <person name="Lee S.-M."/>
            <person name="Levine A."/>
            <person name="Liu H."/>
            <person name="Masuda S."/>
            <person name="Mauel C."/>
            <person name="Medigue C."/>
            <person name="Medina N."/>
            <person name="Mellado R.P."/>
            <person name="Mizuno M."/>
            <person name="Moestl D."/>
            <person name="Nakai S."/>
            <person name="Noback M."/>
            <person name="Noone D."/>
            <person name="O'Reilly M."/>
            <person name="Ogawa K."/>
            <person name="Ogiwara A."/>
            <person name="Oudega B."/>
            <person name="Park S.-H."/>
            <person name="Parro V."/>
            <person name="Pohl T.M."/>
            <person name="Portetelle D."/>
            <person name="Porwollik S."/>
            <person name="Prescott A.M."/>
            <person name="Presecan E."/>
            <person name="Pujic P."/>
            <person name="Purnelle B."/>
            <person name="Rapoport G."/>
            <person name="Rey M."/>
            <person name="Reynolds S."/>
            <person name="Rieger M."/>
            <person name="Rivolta C."/>
            <person name="Rocha E."/>
            <person name="Roche B."/>
            <person name="Rose M."/>
            <person name="Sadaie Y."/>
            <person name="Sato T."/>
            <person name="Scanlan E."/>
            <person name="Schleich S."/>
            <person name="Schroeter R."/>
            <person name="Scoffone F."/>
            <person name="Sekiguchi J."/>
            <person name="Sekowska A."/>
            <person name="Seror S.J."/>
            <person name="Serror P."/>
            <person name="Shin B.-S."/>
            <person name="Soldo B."/>
            <person name="Sorokin A."/>
            <person name="Tacconi E."/>
            <person name="Takagi T."/>
            <person name="Takahashi H."/>
            <person name="Takemaru K."/>
            <person name="Takeuchi M."/>
            <person name="Tamakoshi A."/>
            <person name="Tanaka T."/>
            <person name="Terpstra P."/>
            <person name="Tognoni A."/>
            <person name="Tosato V."/>
            <person name="Uchiyama S."/>
            <person name="Vandenbol M."/>
            <person name="Vannier F."/>
            <person name="Vassarotti A."/>
            <person name="Viari A."/>
            <person name="Wambutt R."/>
            <person name="Wedler E."/>
            <person name="Wedler H."/>
            <person name="Weitzenegger T."/>
            <person name="Winters P."/>
            <person name="Wipat A."/>
            <person name="Yamamoto H."/>
            <person name="Yamane K."/>
            <person name="Yasumoto K."/>
            <person name="Yata K."/>
            <person name="Yoshida K."/>
            <person name="Yoshikawa H.-F."/>
            <person name="Zumstein E."/>
            <person name="Yoshikawa H."/>
            <person name="Danchin A."/>
        </authorList>
    </citation>
    <scope>NUCLEOTIDE SEQUENCE [LARGE SCALE GENOMIC DNA]</scope>
    <source>
        <strain>168</strain>
    </source>
</reference>
<dbReference type="EMBL" id="AB005554">
    <property type="protein sequence ID" value="BAA21594.1"/>
    <property type="molecule type" value="Genomic_DNA"/>
</dbReference>
<dbReference type="EMBL" id="AL009126">
    <property type="protein sequence ID" value="CAB16027.1"/>
    <property type="molecule type" value="Genomic_DNA"/>
</dbReference>
<dbReference type="PIR" id="F70082">
    <property type="entry name" value="F70082"/>
</dbReference>
<dbReference type="RefSeq" id="NP_391870.1">
    <property type="nucleotide sequence ID" value="NC_000964.3"/>
</dbReference>
<dbReference type="RefSeq" id="WP_003243073.1">
    <property type="nucleotide sequence ID" value="NZ_OZ025638.1"/>
</dbReference>
<dbReference type="FunCoup" id="O34704">
    <property type="interactions" value="83"/>
</dbReference>
<dbReference type="STRING" id="224308.BSU39910"/>
<dbReference type="PaxDb" id="224308-BSU39910"/>
<dbReference type="EnsemblBacteria" id="CAB16027">
    <property type="protein sequence ID" value="CAB16027"/>
    <property type="gene ID" value="BSU_39910"/>
</dbReference>
<dbReference type="GeneID" id="937643"/>
<dbReference type="KEGG" id="bsu:BSU39910"/>
<dbReference type="PATRIC" id="fig|224308.179.peg.4317"/>
<dbReference type="eggNOG" id="ENOG50343YD">
    <property type="taxonomic scope" value="Bacteria"/>
</dbReference>
<dbReference type="InParanoid" id="O34704"/>
<dbReference type="OrthoDB" id="2894045at2"/>
<dbReference type="BioCyc" id="BSUB:BSU39910-MONOMER"/>
<dbReference type="Proteomes" id="UP000001570">
    <property type="component" value="Chromosome"/>
</dbReference>
<sequence length="160" mass="19039">MEKQKVLALPDDVHELSTHRSKSIVNYIITLLAFAKKQGLTHQDIVSWIHEQYEERGYYDEWRHINSQQPVGSFVELFIKGRRLLYDKIELFETEDKYVVNTHTWYEKEPSEAFFYFEIDPEEFSAYASILAIENAKRLGIKIDIVKETDVETAYIYKHQ</sequence>
<gene>
    <name type="primary">yxnB</name>
    <name type="ordered locus">BSU39910</name>
</gene>
<organism>
    <name type="scientific">Bacillus subtilis (strain 168)</name>
    <dbReference type="NCBI Taxonomy" id="224308"/>
    <lineage>
        <taxon>Bacteria</taxon>
        <taxon>Bacillati</taxon>
        <taxon>Bacillota</taxon>
        <taxon>Bacilli</taxon>
        <taxon>Bacillales</taxon>
        <taxon>Bacillaceae</taxon>
        <taxon>Bacillus</taxon>
    </lineage>
</organism>
<name>YXNB_BACSU</name>
<feature type="chain" id="PRO_0000050041" description="Uncharacterized protein YxnB">
    <location>
        <begin position="1"/>
        <end position="160"/>
    </location>
</feature>
<keyword id="KW-1185">Reference proteome</keyword>
<proteinExistence type="predicted"/>
<accession>O34704</accession>
<protein>
    <recommendedName>
        <fullName>Uncharacterized protein YxnB</fullName>
    </recommendedName>
</protein>